<keyword id="KW-1185">Reference proteome</keyword>
<keyword id="KW-0687">Ribonucleoprotein</keyword>
<keyword id="KW-0689">Ribosomal protein</keyword>
<sequence length="102" mass="11748">MDSQNIRIRLKAYDHRVLDNSTREIVNTAKRTGAQVRGPIPLPTHIERFTVNRSPHVDKKSREQFEIRTHRRLLDIVEPTPQTVDALMKLDLAAGVDVEIKI</sequence>
<comment type="function">
    <text evidence="1">Involved in the binding of tRNA to the ribosomes.</text>
</comment>
<comment type="subunit">
    <text evidence="1">Part of the 30S ribosomal subunit.</text>
</comment>
<comment type="similarity">
    <text evidence="1">Belongs to the universal ribosomal protein uS10 family.</text>
</comment>
<accession>A5FZW6</accession>
<evidence type="ECO:0000255" key="1">
    <source>
        <dbReference type="HAMAP-Rule" id="MF_00508"/>
    </source>
</evidence>
<evidence type="ECO:0000305" key="2"/>
<organism>
    <name type="scientific">Acidiphilium cryptum (strain JF-5)</name>
    <dbReference type="NCBI Taxonomy" id="349163"/>
    <lineage>
        <taxon>Bacteria</taxon>
        <taxon>Pseudomonadati</taxon>
        <taxon>Pseudomonadota</taxon>
        <taxon>Alphaproteobacteria</taxon>
        <taxon>Acetobacterales</taxon>
        <taxon>Acidocellaceae</taxon>
        <taxon>Acidiphilium</taxon>
    </lineage>
</organism>
<name>RS10_ACICJ</name>
<proteinExistence type="inferred from homology"/>
<gene>
    <name evidence="1" type="primary">rpsJ</name>
    <name type="ordered locus">Acry_1947</name>
</gene>
<protein>
    <recommendedName>
        <fullName evidence="1">Small ribosomal subunit protein uS10</fullName>
    </recommendedName>
    <alternativeName>
        <fullName evidence="2">30S ribosomal protein S10</fullName>
    </alternativeName>
</protein>
<reference key="1">
    <citation type="submission" date="2007-05" db="EMBL/GenBank/DDBJ databases">
        <title>Complete sequence of chromosome of Acidiphilium cryptum JF-5.</title>
        <authorList>
            <consortium name="US DOE Joint Genome Institute"/>
            <person name="Copeland A."/>
            <person name="Lucas S."/>
            <person name="Lapidus A."/>
            <person name="Barry K."/>
            <person name="Detter J.C."/>
            <person name="Glavina del Rio T."/>
            <person name="Hammon N."/>
            <person name="Israni S."/>
            <person name="Dalin E."/>
            <person name="Tice H."/>
            <person name="Pitluck S."/>
            <person name="Sims D."/>
            <person name="Brettin T."/>
            <person name="Bruce D."/>
            <person name="Han C."/>
            <person name="Schmutz J."/>
            <person name="Larimer F."/>
            <person name="Land M."/>
            <person name="Hauser L."/>
            <person name="Kyrpides N."/>
            <person name="Kim E."/>
            <person name="Magnuson T."/>
            <person name="Richardson P."/>
        </authorList>
    </citation>
    <scope>NUCLEOTIDE SEQUENCE [LARGE SCALE GENOMIC DNA]</scope>
    <source>
        <strain>JF-5</strain>
    </source>
</reference>
<feature type="chain" id="PRO_1000014978" description="Small ribosomal subunit protein uS10">
    <location>
        <begin position="1"/>
        <end position="102"/>
    </location>
</feature>
<dbReference type="EMBL" id="CP000697">
    <property type="protein sequence ID" value="ABQ31148.1"/>
    <property type="molecule type" value="Genomic_DNA"/>
</dbReference>
<dbReference type="RefSeq" id="WP_007424172.1">
    <property type="nucleotide sequence ID" value="NC_009484.1"/>
</dbReference>
<dbReference type="SMR" id="A5FZW6"/>
<dbReference type="STRING" id="349163.Acry_1947"/>
<dbReference type="KEGG" id="acr:Acry_1947"/>
<dbReference type="eggNOG" id="COG0051">
    <property type="taxonomic scope" value="Bacteria"/>
</dbReference>
<dbReference type="HOGENOM" id="CLU_122625_1_3_5"/>
<dbReference type="Proteomes" id="UP000000245">
    <property type="component" value="Chromosome"/>
</dbReference>
<dbReference type="GO" id="GO:1990904">
    <property type="term" value="C:ribonucleoprotein complex"/>
    <property type="evidence" value="ECO:0007669"/>
    <property type="project" value="UniProtKB-KW"/>
</dbReference>
<dbReference type="GO" id="GO:0005840">
    <property type="term" value="C:ribosome"/>
    <property type="evidence" value="ECO:0007669"/>
    <property type="project" value="UniProtKB-KW"/>
</dbReference>
<dbReference type="GO" id="GO:0003735">
    <property type="term" value="F:structural constituent of ribosome"/>
    <property type="evidence" value="ECO:0007669"/>
    <property type="project" value="InterPro"/>
</dbReference>
<dbReference type="GO" id="GO:0000049">
    <property type="term" value="F:tRNA binding"/>
    <property type="evidence" value="ECO:0007669"/>
    <property type="project" value="UniProtKB-UniRule"/>
</dbReference>
<dbReference type="GO" id="GO:0006412">
    <property type="term" value="P:translation"/>
    <property type="evidence" value="ECO:0007669"/>
    <property type="project" value="UniProtKB-UniRule"/>
</dbReference>
<dbReference type="FunFam" id="3.30.70.600:FF:000001">
    <property type="entry name" value="30S ribosomal protein S10"/>
    <property type="match status" value="1"/>
</dbReference>
<dbReference type="Gene3D" id="3.30.70.600">
    <property type="entry name" value="Ribosomal protein S10 domain"/>
    <property type="match status" value="1"/>
</dbReference>
<dbReference type="HAMAP" id="MF_00508">
    <property type="entry name" value="Ribosomal_uS10"/>
    <property type="match status" value="1"/>
</dbReference>
<dbReference type="InterPro" id="IPR001848">
    <property type="entry name" value="Ribosomal_uS10"/>
</dbReference>
<dbReference type="InterPro" id="IPR018268">
    <property type="entry name" value="Ribosomal_uS10_CS"/>
</dbReference>
<dbReference type="InterPro" id="IPR027486">
    <property type="entry name" value="Ribosomal_uS10_dom"/>
</dbReference>
<dbReference type="InterPro" id="IPR036838">
    <property type="entry name" value="Ribosomal_uS10_dom_sf"/>
</dbReference>
<dbReference type="NCBIfam" id="NF001861">
    <property type="entry name" value="PRK00596.1"/>
    <property type="match status" value="1"/>
</dbReference>
<dbReference type="NCBIfam" id="TIGR01049">
    <property type="entry name" value="rpsJ_bact"/>
    <property type="match status" value="1"/>
</dbReference>
<dbReference type="Pfam" id="PF00338">
    <property type="entry name" value="Ribosomal_S10"/>
    <property type="match status" value="1"/>
</dbReference>
<dbReference type="PRINTS" id="PR00971">
    <property type="entry name" value="RIBOSOMALS10"/>
</dbReference>
<dbReference type="SMART" id="SM01403">
    <property type="entry name" value="Ribosomal_S10"/>
    <property type="match status" value="1"/>
</dbReference>
<dbReference type="SUPFAM" id="SSF54999">
    <property type="entry name" value="Ribosomal protein S10"/>
    <property type="match status" value="1"/>
</dbReference>
<dbReference type="PROSITE" id="PS00361">
    <property type="entry name" value="RIBOSOMAL_S10"/>
    <property type="match status" value="1"/>
</dbReference>